<accession>O07532</accession>
<reference key="1">
    <citation type="journal article" date="1998" name="Microbiology">
        <title>The 172 kb prkA-addAB region from 83 degrees to 97 degrees of the Bacillus subtilis chromosome contains several dysfunctional genes, the glyB marker, many genes encoding transporter proteins, and the ubiquitous hit gene.</title>
        <authorList>
            <person name="Noback M.A."/>
            <person name="Holsappel S."/>
            <person name="Kiewiet R."/>
            <person name="Terpstra P."/>
            <person name="Wambutt R."/>
            <person name="Wedler H."/>
            <person name="Venema G."/>
            <person name="Bron S."/>
        </authorList>
    </citation>
    <scope>NUCLEOTIDE SEQUENCE [GENOMIC DNA]</scope>
    <source>
        <strain>168</strain>
    </source>
</reference>
<reference key="2">
    <citation type="journal article" date="1997" name="Nature">
        <title>The complete genome sequence of the Gram-positive bacterium Bacillus subtilis.</title>
        <authorList>
            <person name="Kunst F."/>
            <person name="Ogasawara N."/>
            <person name="Moszer I."/>
            <person name="Albertini A.M."/>
            <person name="Alloni G."/>
            <person name="Azevedo V."/>
            <person name="Bertero M.G."/>
            <person name="Bessieres P."/>
            <person name="Bolotin A."/>
            <person name="Borchert S."/>
            <person name="Borriss R."/>
            <person name="Boursier L."/>
            <person name="Brans A."/>
            <person name="Braun M."/>
            <person name="Brignell S.C."/>
            <person name="Bron S."/>
            <person name="Brouillet S."/>
            <person name="Bruschi C.V."/>
            <person name="Caldwell B."/>
            <person name="Capuano V."/>
            <person name="Carter N.M."/>
            <person name="Choi S.-K."/>
            <person name="Codani J.-J."/>
            <person name="Connerton I.F."/>
            <person name="Cummings N.J."/>
            <person name="Daniel R.A."/>
            <person name="Denizot F."/>
            <person name="Devine K.M."/>
            <person name="Duesterhoeft A."/>
            <person name="Ehrlich S.D."/>
            <person name="Emmerson P.T."/>
            <person name="Entian K.-D."/>
            <person name="Errington J."/>
            <person name="Fabret C."/>
            <person name="Ferrari E."/>
            <person name="Foulger D."/>
            <person name="Fritz C."/>
            <person name="Fujita M."/>
            <person name="Fujita Y."/>
            <person name="Fuma S."/>
            <person name="Galizzi A."/>
            <person name="Galleron N."/>
            <person name="Ghim S.-Y."/>
            <person name="Glaser P."/>
            <person name="Goffeau A."/>
            <person name="Golightly E.J."/>
            <person name="Grandi G."/>
            <person name="Guiseppi G."/>
            <person name="Guy B.J."/>
            <person name="Haga K."/>
            <person name="Haiech J."/>
            <person name="Harwood C.R."/>
            <person name="Henaut A."/>
            <person name="Hilbert H."/>
            <person name="Holsappel S."/>
            <person name="Hosono S."/>
            <person name="Hullo M.-F."/>
            <person name="Itaya M."/>
            <person name="Jones L.-M."/>
            <person name="Joris B."/>
            <person name="Karamata D."/>
            <person name="Kasahara Y."/>
            <person name="Klaerr-Blanchard M."/>
            <person name="Klein C."/>
            <person name="Kobayashi Y."/>
            <person name="Koetter P."/>
            <person name="Koningstein G."/>
            <person name="Krogh S."/>
            <person name="Kumano M."/>
            <person name="Kurita K."/>
            <person name="Lapidus A."/>
            <person name="Lardinois S."/>
            <person name="Lauber J."/>
            <person name="Lazarevic V."/>
            <person name="Lee S.-M."/>
            <person name="Levine A."/>
            <person name="Liu H."/>
            <person name="Masuda S."/>
            <person name="Mauel C."/>
            <person name="Medigue C."/>
            <person name="Medina N."/>
            <person name="Mellado R.P."/>
            <person name="Mizuno M."/>
            <person name="Moestl D."/>
            <person name="Nakai S."/>
            <person name="Noback M."/>
            <person name="Noone D."/>
            <person name="O'Reilly M."/>
            <person name="Ogawa K."/>
            <person name="Ogiwara A."/>
            <person name="Oudega B."/>
            <person name="Park S.-H."/>
            <person name="Parro V."/>
            <person name="Pohl T.M."/>
            <person name="Portetelle D."/>
            <person name="Porwollik S."/>
            <person name="Prescott A.M."/>
            <person name="Presecan E."/>
            <person name="Pujic P."/>
            <person name="Purnelle B."/>
            <person name="Rapoport G."/>
            <person name="Rey M."/>
            <person name="Reynolds S."/>
            <person name="Rieger M."/>
            <person name="Rivolta C."/>
            <person name="Rocha E."/>
            <person name="Roche B."/>
            <person name="Rose M."/>
            <person name="Sadaie Y."/>
            <person name="Sato T."/>
            <person name="Scanlan E."/>
            <person name="Schleich S."/>
            <person name="Schroeter R."/>
            <person name="Scoffone F."/>
            <person name="Sekiguchi J."/>
            <person name="Sekowska A."/>
            <person name="Seror S.J."/>
            <person name="Serror P."/>
            <person name="Shin B.-S."/>
            <person name="Soldo B."/>
            <person name="Sorokin A."/>
            <person name="Tacconi E."/>
            <person name="Takagi T."/>
            <person name="Takahashi H."/>
            <person name="Takemaru K."/>
            <person name="Takeuchi M."/>
            <person name="Tamakoshi A."/>
            <person name="Tanaka T."/>
            <person name="Terpstra P."/>
            <person name="Tognoni A."/>
            <person name="Tosato V."/>
            <person name="Uchiyama S."/>
            <person name="Vandenbol M."/>
            <person name="Vannier F."/>
            <person name="Vassarotti A."/>
            <person name="Viari A."/>
            <person name="Wambutt R."/>
            <person name="Wedler E."/>
            <person name="Wedler H."/>
            <person name="Weitzenegger T."/>
            <person name="Winters P."/>
            <person name="Wipat A."/>
            <person name="Yamamoto H."/>
            <person name="Yamane K."/>
            <person name="Yasumoto K."/>
            <person name="Yata K."/>
            <person name="Yoshida K."/>
            <person name="Yoshikawa H.-F."/>
            <person name="Zumstein E."/>
            <person name="Yoshikawa H."/>
            <person name="Danchin A."/>
        </authorList>
    </citation>
    <scope>NUCLEOTIDE SEQUENCE [LARGE SCALE GENOMIC DNA]</scope>
    <source>
        <strain>168</strain>
    </source>
</reference>
<reference key="3">
    <citation type="journal article" date="2009" name="Microbiology">
        <title>From a consortium sequence to a unified sequence: the Bacillus subtilis 168 reference genome a decade later.</title>
        <authorList>
            <person name="Barbe V."/>
            <person name="Cruveiller S."/>
            <person name="Kunst F."/>
            <person name="Lenoble P."/>
            <person name="Meurice G."/>
            <person name="Sekowska A."/>
            <person name="Vallenet D."/>
            <person name="Wang T."/>
            <person name="Moszer I."/>
            <person name="Medigue C."/>
            <person name="Danchin A."/>
        </authorList>
    </citation>
    <scope>SEQUENCE REVISION TO 87</scope>
</reference>
<reference key="4">
    <citation type="journal article" date="1999" name="Microbiology">
        <title>Bacillus subtilis 168 gene lytF encodes a gamma-D-glutamate-meso-diaminopimelate muropeptidase expressed by the alternative vegetative sigma factor, sigma-D.</title>
        <authorList>
            <person name="Margot P."/>
            <person name="Pagni M."/>
            <person name="Karamata D."/>
        </authorList>
    </citation>
    <scope>PROTEIN SEQUENCE OF 27-37</scope>
    <scope>FUNCTION</scope>
    <scope>CATALYTIC ACTIVITY</scope>
    <scope>ACTIVITY REGULATION</scope>
    <scope>PH DEPENDENCE</scope>
    <scope>INDUCTION</scope>
    <scope>SUBCELLULAR LOCATION</scope>
    <source>
        <strain>168</strain>
    </source>
</reference>
<reference key="5">
    <citation type="journal article" date="1999" name="J. Bacteriol.">
        <title>Peptidoglycan hydrolase LytF plays a role in cell separation with CwlF during vegetative growth of Bacillus subtilis.</title>
        <authorList>
            <person name="Ohnishi R."/>
            <person name="Ishikawa S."/>
            <person name="Sekiguchi J."/>
        </authorList>
    </citation>
    <scope>FUNCTION</scope>
    <scope>CATALYTIC ACTIVITY</scope>
    <scope>INDUCTION</scope>
    <scope>DOMAIN</scope>
    <source>
        <strain>168</strain>
    </source>
</reference>
<reference key="6">
    <citation type="journal article" date="2003" name="J. Bacteriol.">
        <title>Localization of the vegetative cell wall hydrolases LytC, LytE, and LytF on the Bacillus subtilis cell surface and stability of these enzymes to cell wall-bound or extracellular proteases.</title>
        <authorList>
            <person name="Yamamoto H."/>
            <person name="Kurosawa S."/>
            <person name="Sekiguchi J."/>
        </authorList>
    </citation>
    <scope>SUBCELLULAR LOCATION</scope>
    <source>
        <strain>168</strain>
    </source>
</reference>
<reference key="7">
    <citation type="journal article" date="2009" name="J. Bacteriol.">
        <title>Role of the sigmaD-dependent autolysins in Bacillus subtilis population heterogeneity.</title>
        <authorList>
            <person name="Chen R."/>
            <person name="Guttenplan S.B."/>
            <person name="Blair K.M."/>
            <person name="Kearns D.B."/>
        </authorList>
    </citation>
    <scope>FUNCTION IN CELL SEPARATION</scope>
    <scope>INDUCTION</scope>
    <scope>DISRUPTION PHENOTYPE</scope>
    <source>
        <strain>168 / PY79</strain>
        <strain>3610</strain>
    </source>
</reference>
<organism>
    <name type="scientific">Bacillus subtilis (strain 168)</name>
    <dbReference type="NCBI Taxonomy" id="224308"/>
    <lineage>
        <taxon>Bacteria</taxon>
        <taxon>Bacillati</taxon>
        <taxon>Bacillota</taxon>
        <taxon>Bacilli</taxon>
        <taxon>Bacillales</taxon>
        <taxon>Bacillaceae</taxon>
        <taxon>Bacillus</taxon>
    </lineage>
</organism>
<protein>
    <recommendedName>
        <fullName>Peptidoglycan endopeptidase LytF</fullName>
        <ecNumber>3.4.-.-</ecNumber>
    </recommendedName>
    <alternativeName>
        <fullName>Autolysin LytF</fullName>
    </alternativeName>
    <alternativeName>
        <fullName>Cell wall-associated polypeptide CWBP49'</fullName>
    </alternativeName>
    <alternativeName>
        <fullName>Gamma-D-glutamate-meso-diaminopimelate muropeptidase LytF</fullName>
    </alternativeName>
    <alternativeName>
        <fullName>Peptidoglycan hydrolase LytF</fullName>
    </alternativeName>
    <alternativeName>
        <fullName>Vegetative cell wall hydrolase LytF</fullName>
    </alternativeName>
</protein>
<evidence type="ECO:0000255" key="1">
    <source>
        <dbReference type="PROSITE-ProRule" id="PRU01118"/>
    </source>
</evidence>
<evidence type="ECO:0000255" key="2">
    <source>
        <dbReference type="PROSITE-ProRule" id="PRU01284"/>
    </source>
</evidence>
<evidence type="ECO:0000256" key="3">
    <source>
        <dbReference type="SAM" id="MobiDB-lite"/>
    </source>
</evidence>
<evidence type="ECO:0000269" key="4">
    <source>
    </source>
</evidence>
<evidence type="ECO:0000269" key="5">
    <source>
    </source>
</evidence>
<evidence type="ECO:0000269" key="6">
    <source>
    </source>
</evidence>
<evidence type="ECO:0000269" key="7">
    <source>
    </source>
</evidence>
<evidence type="ECO:0000305" key="8"/>
<evidence type="ECO:0000305" key="9">
    <source>
    </source>
</evidence>
<comment type="function">
    <text evidence="4 5 7">Cell wall hydrolase that cleaves gamma-D-glutamate-meso-diaminopimelate bonds in peptidoglycan. LytF is necessary and sufficient for vegetative daughter cell separation, and also seems to play a role in cell autolysis.</text>
</comment>
<comment type="activity regulation">
    <text evidence="4">Is inhibited in vitro by para-hydroxymercuribenzoate, a sulfydryl inhibitor.</text>
</comment>
<comment type="biophysicochemical properties">
    <phDependence>
        <text evidence="4">Optimum pH is 8.</text>
    </phDependence>
</comment>
<comment type="subcellular location">
    <subcellularLocation>
        <location evidence="4 6">Secreted</location>
        <location evidence="4 6">Cell wall</location>
    </subcellularLocation>
    <text>LytF is localized at cell separation sites and cell poles of rod-shaped cells during vegetative growth.</text>
</comment>
<comment type="induction">
    <text evidence="4 5 7">Expressed in the vegetative growth phase under exclusive control of sigma-D (SigD). Expression of lytF is heterogeneous in the exponentially growing cell population; it is ON in single cells and OFF in long chains. The same subpopulation of cells that express lytF also express flagellin.</text>
</comment>
<comment type="domain">
    <text evidence="5">The N-terminal domain contains LysM domains that are thought to be involved in peptidoglycan binding, while the C-terminal domain is endowed with the catalytic activity.</text>
</comment>
<comment type="disruption phenotype">
    <text evidence="7">Cells from an undomesticated strain (3610) lacking this gene grow predominantly as chains, whereas wild-type cells grow as separate individuals. They do not show a reduction in the rate of swarming motility.</text>
</comment>
<comment type="similarity">
    <text evidence="2 8">Belongs to the peptidase C40 family.</text>
</comment>
<comment type="caution">
    <text evidence="9">In domesticated laboratory strains (168 and derivatives), lytF is not expressed in a majority of the growing cells. These cells form a subpopulation that grows in multicellular, nonmotile chains. Undomesticated strains (3610) express lytF in a majority of the population, that grows as separate individual motile cells (PubMed:19542270).</text>
</comment>
<name>LYTF_BACSU</name>
<proteinExistence type="evidence at protein level"/>
<keyword id="KW-0134">Cell wall</keyword>
<keyword id="KW-0961">Cell wall biogenesis/degradation</keyword>
<keyword id="KW-0903">Direct protein sequencing</keyword>
<keyword id="KW-0378">Hydrolase</keyword>
<keyword id="KW-0645">Protease</keyword>
<keyword id="KW-1185">Reference proteome</keyword>
<keyword id="KW-0677">Repeat</keyword>
<keyword id="KW-0964">Secreted</keyword>
<keyword id="KW-0732">Signal</keyword>
<keyword id="KW-0788">Thiol protease</keyword>
<gene>
    <name type="primary">lytF</name>
    <name type="synonym">cwlE</name>
    <name type="synonym">yhdD</name>
    <name type="ordered locus">BSU09370</name>
</gene>
<feature type="signal peptide" evidence="4">
    <location>
        <begin position="1"/>
        <end position="26"/>
    </location>
</feature>
<feature type="chain" id="PRO_0000019753" description="Peptidoglycan endopeptidase LytF">
    <location>
        <begin position="27"/>
        <end position="488"/>
    </location>
</feature>
<feature type="domain" description="LysM 1" evidence="1">
    <location>
        <begin position="27"/>
        <end position="70"/>
    </location>
</feature>
<feature type="domain" description="LysM 2" evidence="1">
    <location>
        <begin position="92"/>
        <end position="135"/>
    </location>
</feature>
<feature type="domain" description="LysM 3" evidence="1">
    <location>
        <begin position="174"/>
        <end position="217"/>
    </location>
</feature>
<feature type="domain" description="LysM 4" evidence="1">
    <location>
        <begin position="240"/>
        <end position="283"/>
    </location>
</feature>
<feature type="domain" description="LysM 5" evidence="1">
    <location>
        <begin position="307"/>
        <end position="350"/>
    </location>
</feature>
<feature type="domain" description="NlpC/P60" evidence="2">
    <location>
        <begin position="370"/>
        <end position="488"/>
    </location>
</feature>
<feature type="region of interest" description="Disordered" evidence="3">
    <location>
        <begin position="70"/>
        <end position="93"/>
    </location>
</feature>
<feature type="region of interest" description="Disordered" evidence="3">
    <location>
        <begin position="137"/>
        <end position="176"/>
    </location>
</feature>
<feature type="region of interest" description="Disordered" evidence="3">
    <location>
        <begin position="218"/>
        <end position="239"/>
    </location>
</feature>
<feature type="region of interest" description="Disordered" evidence="3">
    <location>
        <begin position="286"/>
        <end position="306"/>
    </location>
</feature>
<feature type="compositionally biased region" description="Low complexity" evidence="3">
    <location>
        <begin position="72"/>
        <end position="93"/>
    </location>
</feature>
<feature type="compositionally biased region" description="Low complexity" evidence="3">
    <location>
        <begin position="140"/>
        <end position="172"/>
    </location>
</feature>
<feature type="active site" description="Nucleophile" evidence="2">
    <location>
        <position position="400"/>
    </location>
</feature>
<feature type="active site" description="Proton acceptor" evidence="2">
    <location>
        <position position="449"/>
    </location>
</feature>
<feature type="active site" evidence="2">
    <location>
        <position position="461"/>
    </location>
</feature>
<feature type="sequence conflict" description="In Ref. 1; CAA74437." evidence="8" ref="1">
    <original>K</original>
    <variation>M</variation>
    <location>
        <position position="87"/>
    </location>
</feature>
<sequence length="488" mass="51395">MKKKLAAGLTASAIVGTTLVVTPAEAATIKVKSGDSLWKLAQTYNTSVAALTSANHLSTTVLSIGQTLTIPGSKSSTSSSTSSSTTKKSGSSVYTVKSGDSLWLIANEFKMTVQELKKLNGLSSDLIRAGQKLKVSGTVSSSSSSSKKSNSNKSSSSSSKSSSNKSSSSSSSTGTYKVQLGDSLWKIANKVNMSIAELKVLNNLKSDTIYVNQVLKTKSSGSDTSSKDNSSKSNQTSATTKYTVKSGDSLWKIANNYNLTVQQIRNINNLKSDVLYVGQVLKLTGKASSGSSSSSSSSSNASSGTTTTYTVKSGDSLWVIAQKFNVTAQQIREKNNLKTDVLQVGQKLVISGKASSSSSSGSSNTTSSTSAKINTMISAAKAQLGVPYRWGGTTPSGFDCSGFIYYVLNKVTSVSRLTAAGYWNTMKSVSQPAVGDFVFFSTYKAGPSHVGIYLGNGEFINANDSGVVISNMNNSYWKQRYLGAKRYF</sequence>
<dbReference type="EC" id="3.4.-.-"/>
<dbReference type="EMBL" id="Y14079">
    <property type="protein sequence ID" value="CAA74437.1"/>
    <property type="molecule type" value="Genomic_DNA"/>
</dbReference>
<dbReference type="EMBL" id="AL009126">
    <property type="protein sequence ID" value="CAB12776.2"/>
    <property type="molecule type" value="Genomic_DNA"/>
</dbReference>
<dbReference type="PIR" id="B69825">
    <property type="entry name" value="B69825"/>
</dbReference>
<dbReference type="RefSeq" id="NP_388818.2">
    <property type="nucleotide sequence ID" value="NC_000964.3"/>
</dbReference>
<dbReference type="RefSeq" id="WP_003244874.1">
    <property type="nucleotide sequence ID" value="NZ_OZ025638.1"/>
</dbReference>
<dbReference type="SMR" id="O07532"/>
<dbReference type="FunCoup" id="O07532">
    <property type="interactions" value="72"/>
</dbReference>
<dbReference type="STRING" id="224308.BSU09370"/>
<dbReference type="CAZy" id="CBM50">
    <property type="family name" value="Carbohydrate-Binding Module Family 50"/>
</dbReference>
<dbReference type="MEROPS" id="C40.002"/>
<dbReference type="PaxDb" id="224308-BSU09370"/>
<dbReference type="EnsemblBacteria" id="CAB12776">
    <property type="protein sequence ID" value="CAB12776"/>
    <property type="gene ID" value="BSU_09370"/>
</dbReference>
<dbReference type="GeneID" id="939271"/>
<dbReference type="KEGG" id="bsu:BSU09370"/>
<dbReference type="PATRIC" id="fig|224308.179.peg.1010"/>
<dbReference type="eggNOG" id="COG0791">
    <property type="taxonomic scope" value="Bacteria"/>
</dbReference>
<dbReference type="eggNOG" id="COG1388">
    <property type="taxonomic scope" value="Bacteria"/>
</dbReference>
<dbReference type="InParanoid" id="O07532"/>
<dbReference type="OrthoDB" id="9813368at2"/>
<dbReference type="PhylomeDB" id="O07532"/>
<dbReference type="BioCyc" id="BSUB:BSU09370-MONOMER"/>
<dbReference type="Proteomes" id="UP000001570">
    <property type="component" value="Chromosome"/>
</dbReference>
<dbReference type="GO" id="GO:0005576">
    <property type="term" value="C:extracellular region"/>
    <property type="evidence" value="ECO:0007669"/>
    <property type="project" value="UniProtKB-KW"/>
</dbReference>
<dbReference type="GO" id="GO:0008234">
    <property type="term" value="F:cysteine-type peptidase activity"/>
    <property type="evidence" value="ECO:0007669"/>
    <property type="project" value="UniProtKB-KW"/>
</dbReference>
<dbReference type="GO" id="GO:0008932">
    <property type="term" value="F:lytic endotransglycosylase activity"/>
    <property type="evidence" value="ECO:0000318"/>
    <property type="project" value="GO_Central"/>
</dbReference>
<dbReference type="GO" id="GO:0071555">
    <property type="term" value="P:cell wall organization"/>
    <property type="evidence" value="ECO:0007669"/>
    <property type="project" value="UniProtKB-KW"/>
</dbReference>
<dbReference type="GO" id="GO:0006508">
    <property type="term" value="P:proteolysis"/>
    <property type="evidence" value="ECO:0007669"/>
    <property type="project" value="UniProtKB-KW"/>
</dbReference>
<dbReference type="CDD" id="cd00118">
    <property type="entry name" value="LysM"/>
    <property type="match status" value="5"/>
</dbReference>
<dbReference type="FunFam" id="3.10.350.10:FF:000026">
    <property type="entry name" value="Peptidoglycan endopeptidase"/>
    <property type="match status" value="1"/>
</dbReference>
<dbReference type="FunFam" id="3.10.350.10:FF:000011">
    <property type="entry name" value="Peptidoglycan endopeptidase LytF"/>
    <property type="match status" value="1"/>
</dbReference>
<dbReference type="FunFam" id="3.90.1720.10:FF:000009">
    <property type="entry name" value="Peptidoglycan endopeptidase LytF"/>
    <property type="match status" value="1"/>
</dbReference>
<dbReference type="Gene3D" id="3.90.1720.10">
    <property type="entry name" value="endopeptidase domain like (from Nostoc punctiforme)"/>
    <property type="match status" value="1"/>
</dbReference>
<dbReference type="Gene3D" id="3.10.350.10">
    <property type="entry name" value="LysM domain"/>
    <property type="match status" value="5"/>
</dbReference>
<dbReference type="InterPro" id="IPR018392">
    <property type="entry name" value="LysM_dom"/>
</dbReference>
<dbReference type="InterPro" id="IPR036779">
    <property type="entry name" value="LysM_dom_sf"/>
</dbReference>
<dbReference type="InterPro" id="IPR000064">
    <property type="entry name" value="NLP_P60_dom"/>
</dbReference>
<dbReference type="InterPro" id="IPR038765">
    <property type="entry name" value="Papain-like_cys_pep_sf"/>
</dbReference>
<dbReference type="PANTHER" id="PTHR33734">
    <property type="entry name" value="LYSM DOMAIN-CONTAINING GPI-ANCHORED PROTEIN 2"/>
    <property type="match status" value="1"/>
</dbReference>
<dbReference type="PANTHER" id="PTHR33734:SF22">
    <property type="entry name" value="MEMBRANE-BOUND LYTIC MUREIN TRANSGLYCOSYLASE D"/>
    <property type="match status" value="1"/>
</dbReference>
<dbReference type="Pfam" id="PF01476">
    <property type="entry name" value="LysM"/>
    <property type="match status" value="5"/>
</dbReference>
<dbReference type="Pfam" id="PF00877">
    <property type="entry name" value="NLPC_P60"/>
    <property type="match status" value="1"/>
</dbReference>
<dbReference type="SMART" id="SM00257">
    <property type="entry name" value="LysM"/>
    <property type="match status" value="5"/>
</dbReference>
<dbReference type="SUPFAM" id="SSF54001">
    <property type="entry name" value="Cysteine proteinases"/>
    <property type="match status" value="1"/>
</dbReference>
<dbReference type="SUPFAM" id="SSF54106">
    <property type="entry name" value="LysM domain"/>
    <property type="match status" value="5"/>
</dbReference>
<dbReference type="PROSITE" id="PS51782">
    <property type="entry name" value="LYSM"/>
    <property type="match status" value="5"/>
</dbReference>
<dbReference type="PROSITE" id="PS51935">
    <property type="entry name" value="NLPC_P60"/>
    <property type="match status" value="1"/>
</dbReference>